<dbReference type="EC" id="7.1.2.2" evidence="1"/>
<dbReference type="EMBL" id="AM180088">
    <property type="protein sequence ID" value="CAJ53341.1"/>
    <property type="molecule type" value="Genomic_DNA"/>
</dbReference>
<dbReference type="RefSeq" id="WP_011572446.1">
    <property type="nucleotide sequence ID" value="NC_008212.1"/>
</dbReference>
<dbReference type="SMR" id="Q18FB7"/>
<dbReference type="STRING" id="362976.HQ_3244A"/>
<dbReference type="GeneID" id="4193747"/>
<dbReference type="KEGG" id="hwa:HQ_3244A"/>
<dbReference type="eggNOG" id="arCOG00868">
    <property type="taxonomic scope" value="Archaea"/>
</dbReference>
<dbReference type="HOGENOM" id="CLU_008162_3_1_2"/>
<dbReference type="Proteomes" id="UP000001975">
    <property type="component" value="Chromosome"/>
</dbReference>
<dbReference type="GO" id="GO:0005886">
    <property type="term" value="C:plasma membrane"/>
    <property type="evidence" value="ECO:0007669"/>
    <property type="project" value="UniProtKB-SubCell"/>
</dbReference>
<dbReference type="GO" id="GO:0033178">
    <property type="term" value="C:proton-transporting two-sector ATPase complex, catalytic domain"/>
    <property type="evidence" value="ECO:0007669"/>
    <property type="project" value="InterPro"/>
</dbReference>
<dbReference type="GO" id="GO:0005524">
    <property type="term" value="F:ATP binding"/>
    <property type="evidence" value="ECO:0007669"/>
    <property type="project" value="UniProtKB-UniRule"/>
</dbReference>
<dbReference type="GO" id="GO:0046933">
    <property type="term" value="F:proton-transporting ATP synthase activity, rotational mechanism"/>
    <property type="evidence" value="ECO:0007669"/>
    <property type="project" value="UniProtKB-UniRule"/>
</dbReference>
<dbReference type="GO" id="GO:0046961">
    <property type="term" value="F:proton-transporting ATPase activity, rotational mechanism"/>
    <property type="evidence" value="ECO:0007669"/>
    <property type="project" value="InterPro"/>
</dbReference>
<dbReference type="GO" id="GO:0042777">
    <property type="term" value="P:proton motive force-driven plasma membrane ATP synthesis"/>
    <property type="evidence" value="ECO:0007669"/>
    <property type="project" value="UniProtKB-UniRule"/>
</dbReference>
<dbReference type="CDD" id="cd18111">
    <property type="entry name" value="ATP-synt_V_A-type_alpha_C"/>
    <property type="match status" value="1"/>
</dbReference>
<dbReference type="CDD" id="cd01134">
    <property type="entry name" value="V_A-ATPase_A"/>
    <property type="match status" value="1"/>
</dbReference>
<dbReference type="Gene3D" id="2.40.30.20">
    <property type="match status" value="1"/>
</dbReference>
<dbReference type="Gene3D" id="2.40.50.100">
    <property type="match status" value="1"/>
</dbReference>
<dbReference type="Gene3D" id="1.10.1140.10">
    <property type="entry name" value="Bovine Mitochondrial F1-atpase, Atp Synthase Beta Chain, Chain D, domain 3"/>
    <property type="match status" value="1"/>
</dbReference>
<dbReference type="Gene3D" id="3.40.50.300">
    <property type="entry name" value="P-loop containing nucleotide triphosphate hydrolases"/>
    <property type="match status" value="1"/>
</dbReference>
<dbReference type="HAMAP" id="MF_00309">
    <property type="entry name" value="ATP_synth_A_arch"/>
    <property type="match status" value="1"/>
</dbReference>
<dbReference type="InterPro" id="IPR055190">
    <property type="entry name" value="ATP-synt_VA_C"/>
</dbReference>
<dbReference type="InterPro" id="IPR031686">
    <property type="entry name" value="ATP-synth_a_Xtn"/>
</dbReference>
<dbReference type="InterPro" id="IPR023366">
    <property type="entry name" value="ATP_synth_asu-like_sf"/>
</dbReference>
<dbReference type="InterPro" id="IPR005726">
    <property type="entry name" value="ATP_synth_asu_arc"/>
</dbReference>
<dbReference type="InterPro" id="IPR020003">
    <property type="entry name" value="ATPase_a/bsu_AS"/>
</dbReference>
<dbReference type="InterPro" id="IPR004100">
    <property type="entry name" value="ATPase_F1/V1/A1_a/bsu_N"/>
</dbReference>
<dbReference type="InterPro" id="IPR036121">
    <property type="entry name" value="ATPase_F1/V1/A1_a/bsu_N_sf"/>
</dbReference>
<dbReference type="InterPro" id="IPR000194">
    <property type="entry name" value="ATPase_F1/V1/A1_a/bsu_nucl-bd"/>
</dbReference>
<dbReference type="InterPro" id="IPR024034">
    <property type="entry name" value="ATPase_F1/V1_b/a_C"/>
</dbReference>
<dbReference type="InterPro" id="IPR027417">
    <property type="entry name" value="P-loop_NTPase"/>
</dbReference>
<dbReference type="InterPro" id="IPR022878">
    <property type="entry name" value="V-ATPase_asu"/>
</dbReference>
<dbReference type="NCBIfam" id="TIGR01043">
    <property type="entry name" value="ATP_syn_A_arch"/>
    <property type="match status" value="1"/>
</dbReference>
<dbReference type="NCBIfam" id="NF003220">
    <property type="entry name" value="PRK04192.1"/>
    <property type="match status" value="1"/>
</dbReference>
<dbReference type="PANTHER" id="PTHR43607:SF1">
    <property type="entry name" value="H(+)-TRANSPORTING TWO-SECTOR ATPASE"/>
    <property type="match status" value="1"/>
</dbReference>
<dbReference type="PANTHER" id="PTHR43607">
    <property type="entry name" value="V-TYPE PROTON ATPASE CATALYTIC SUBUNIT A"/>
    <property type="match status" value="1"/>
</dbReference>
<dbReference type="Pfam" id="PF00006">
    <property type="entry name" value="ATP-synt_ab"/>
    <property type="match status" value="1"/>
</dbReference>
<dbReference type="Pfam" id="PF02874">
    <property type="entry name" value="ATP-synt_ab_N"/>
    <property type="match status" value="1"/>
</dbReference>
<dbReference type="Pfam" id="PF16886">
    <property type="entry name" value="ATP-synt_ab_Xtn"/>
    <property type="match status" value="1"/>
</dbReference>
<dbReference type="Pfam" id="PF22919">
    <property type="entry name" value="ATP-synt_VA_C"/>
    <property type="match status" value="1"/>
</dbReference>
<dbReference type="SUPFAM" id="SSF47917">
    <property type="entry name" value="C-terminal domain of alpha and beta subunits of F1 ATP synthase"/>
    <property type="match status" value="1"/>
</dbReference>
<dbReference type="SUPFAM" id="SSF50615">
    <property type="entry name" value="N-terminal domain of alpha and beta subunits of F1 ATP synthase"/>
    <property type="match status" value="1"/>
</dbReference>
<dbReference type="SUPFAM" id="SSF52540">
    <property type="entry name" value="P-loop containing nucleoside triphosphate hydrolases"/>
    <property type="match status" value="1"/>
</dbReference>
<dbReference type="PROSITE" id="PS00152">
    <property type="entry name" value="ATPASE_ALPHA_BETA"/>
    <property type="match status" value="1"/>
</dbReference>
<gene>
    <name evidence="1" type="primary">atpA</name>
    <name type="ordered locus">HQ_3244A</name>
</gene>
<name>AATA_HALWD</name>
<organism>
    <name type="scientific">Haloquadratum walsbyi (strain DSM 16790 / HBSQ001)</name>
    <dbReference type="NCBI Taxonomy" id="362976"/>
    <lineage>
        <taxon>Archaea</taxon>
        <taxon>Methanobacteriati</taxon>
        <taxon>Methanobacteriota</taxon>
        <taxon>Stenosarchaea group</taxon>
        <taxon>Halobacteria</taxon>
        <taxon>Halobacteriales</taxon>
        <taxon>Haloferacaceae</taxon>
        <taxon>Haloquadratum</taxon>
    </lineage>
</organism>
<evidence type="ECO:0000255" key="1">
    <source>
        <dbReference type="HAMAP-Rule" id="MF_00309"/>
    </source>
</evidence>
<evidence type="ECO:0000256" key="2">
    <source>
        <dbReference type="SAM" id="MobiDB-lite"/>
    </source>
</evidence>
<sequence length="585" mass="64804">MSQTEQAVREDGVIRSVSGPVVTARGLDARMNDVVYVGDEGLMGEVIEIEDNVTTVQVYEETSGIGPDEPVRNTGEPLSVDLGPGLLDTIYDGVQRPLDILEDKMGSPYLDRGVDAPGIELDTEWEFEPTVSEGDTVESGDEVGIVEETVTIDHKVLVPPDYEGGEVTTVKSGEFTVEETVVELSSGESVQMRQEWPVREPRPTVEKKTPREPLVSGQRILDGLFPIAKGGTAAIPGPFGSGKTVTQHQLAKYADADIIIYVGCGERGNEMTEVIDDFPELEDPSTGNPLMARTSLIANTSNMPVAARESCVYTGITIAEFYRDMGYDVALMADSTSRWAEAMREISSRLEEMPGEEGYPAYLAARLAQFYERAGYFENVNGTEGSVSAIGAVSPPGGDFSEPVTQNTLRIVKTFWALDADLAERRHFPSINWDESYSLYKEQLDPWFQENVEDDWPEERQWAVDVLDEESELQEIVQLVGKDALPDDQQLTLEVARYLRESYLQQNAFHPVDTYCSPEKTYLTVTAIHQFNDEAFEALDAGVPVDEIISIDAAPRLNRIGVQDDYEEYIATLKEDIATQLQELY</sequence>
<keyword id="KW-0066">ATP synthesis</keyword>
<keyword id="KW-0067">ATP-binding</keyword>
<keyword id="KW-1003">Cell membrane</keyword>
<keyword id="KW-0375">Hydrogen ion transport</keyword>
<keyword id="KW-0406">Ion transport</keyword>
<keyword id="KW-0472">Membrane</keyword>
<keyword id="KW-0547">Nucleotide-binding</keyword>
<keyword id="KW-1185">Reference proteome</keyword>
<keyword id="KW-1278">Translocase</keyword>
<keyword id="KW-0813">Transport</keyword>
<proteinExistence type="inferred from homology"/>
<reference key="1">
    <citation type="journal article" date="2006" name="BMC Genomics">
        <title>The genome of the square archaeon Haloquadratum walsbyi: life at the limits of water activity.</title>
        <authorList>
            <person name="Bolhuis H."/>
            <person name="Palm P."/>
            <person name="Wende A."/>
            <person name="Falb M."/>
            <person name="Rampp M."/>
            <person name="Rodriguez-Valera F."/>
            <person name="Pfeiffer F."/>
            <person name="Oesterhelt D."/>
        </authorList>
    </citation>
    <scope>NUCLEOTIDE SEQUENCE [LARGE SCALE GENOMIC DNA]</scope>
    <source>
        <strain>DSM 16790 / HBSQ001</strain>
    </source>
</reference>
<feature type="chain" id="PRO_0000322471" description="A-type ATP synthase subunit A">
    <location>
        <begin position="1"/>
        <end position="585"/>
    </location>
</feature>
<feature type="region of interest" description="Disordered" evidence="2">
    <location>
        <begin position="192"/>
        <end position="211"/>
    </location>
</feature>
<feature type="compositionally biased region" description="Basic and acidic residues" evidence="2">
    <location>
        <begin position="196"/>
        <end position="211"/>
    </location>
</feature>
<feature type="binding site" evidence="1">
    <location>
        <begin position="237"/>
        <end position="244"/>
    </location>
    <ligand>
        <name>ATP</name>
        <dbReference type="ChEBI" id="CHEBI:30616"/>
    </ligand>
</feature>
<accession>Q18FB7</accession>
<comment type="function">
    <text evidence="1">Component of the A-type ATP synthase that produces ATP from ADP in the presence of a proton gradient across the membrane. The A chain is the catalytic subunit.</text>
</comment>
<comment type="catalytic activity">
    <reaction evidence="1">
        <text>ATP + H2O + 4 H(+)(in) = ADP + phosphate + 5 H(+)(out)</text>
        <dbReference type="Rhea" id="RHEA:57720"/>
        <dbReference type="ChEBI" id="CHEBI:15377"/>
        <dbReference type="ChEBI" id="CHEBI:15378"/>
        <dbReference type="ChEBI" id="CHEBI:30616"/>
        <dbReference type="ChEBI" id="CHEBI:43474"/>
        <dbReference type="ChEBI" id="CHEBI:456216"/>
        <dbReference type="EC" id="7.1.2.2"/>
    </reaction>
</comment>
<comment type="subunit">
    <text evidence="1">Has multiple subunits with at least A(3), B(3), C, D, E, F, H, I and proteolipid K(x).</text>
</comment>
<comment type="subcellular location">
    <subcellularLocation>
        <location evidence="1">Cell membrane</location>
        <topology evidence="1">Peripheral membrane protein</topology>
    </subcellularLocation>
</comment>
<comment type="similarity">
    <text evidence="1">Belongs to the ATPase alpha/beta chains family.</text>
</comment>
<protein>
    <recommendedName>
        <fullName evidence="1">A-type ATP synthase subunit A</fullName>
        <ecNumber evidence="1">7.1.2.2</ecNumber>
    </recommendedName>
</protein>